<dbReference type="EC" id="3.4.11.-"/>
<dbReference type="EMBL" id="AY496929">
    <property type="protein sequence ID" value="AAS76669.1"/>
    <property type="molecule type" value="Genomic_DNA"/>
</dbReference>
<dbReference type="SMR" id="Q5QHG6"/>
<dbReference type="GlyCosmos" id="Q5QHG6">
    <property type="glycosylation" value="4 sites, No reported glycans"/>
</dbReference>
<dbReference type="VEuPathDB" id="FungiDB:TERG_08405"/>
<dbReference type="OMA" id="VRFCFWT"/>
<dbReference type="GO" id="GO:0005576">
    <property type="term" value="C:extracellular region"/>
    <property type="evidence" value="ECO:0007669"/>
    <property type="project" value="UniProtKB-SubCell"/>
</dbReference>
<dbReference type="GO" id="GO:0004177">
    <property type="term" value="F:aminopeptidase activity"/>
    <property type="evidence" value="ECO:0007669"/>
    <property type="project" value="UniProtKB-KW"/>
</dbReference>
<dbReference type="GO" id="GO:0046872">
    <property type="term" value="F:metal ion binding"/>
    <property type="evidence" value="ECO:0007669"/>
    <property type="project" value="UniProtKB-KW"/>
</dbReference>
<dbReference type="GO" id="GO:0008235">
    <property type="term" value="F:metalloexopeptidase activity"/>
    <property type="evidence" value="ECO:0007669"/>
    <property type="project" value="InterPro"/>
</dbReference>
<dbReference type="GO" id="GO:0006508">
    <property type="term" value="P:proteolysis"/>
    <property type="evidence" value="ECO:0007669"/>
    <property type="project" value="UniProtKB-KW"/>
</dbReference>
<dbReference type="CDD" id="cd03876">
    <property type="entry name" value="M28_SGAP_like"/>
    <property type="match status" value="1"/>
</dbReference>
<dbReference type="CDD" id="cd02130">
    <property type="entry name" value="PA_ScAPY_like"/>
    <property type="match status" value="1"/>
</dbReference>
<dbReference type="FunFam" id="3.40.630.10:FF:000054">
    <property type="entry name" value="Peptide hydrolase"/>
    <property type="match status" value="1"/>
</dbReference>
<dbReference type="Gene3D" id="3.50.30.30">
    <property type="match status" value="1"/>
</dbReference>
<dbReference type="Gene3D" id="3.40.630.10">
    <property type="entry name" value="Zn peptidases"/>
    <property type="match status" value="1"/>
</dbReference>
<dbReference type="InterPro" id="IPR045175">
    <property type="entry name" value="M28_fam"/>
</dbReference>
<dbReference type="InterPro" id="IPR041756">
    <property type="entry name" value="M28_SGAP-like"/>
</dbReference>
<dbReference type="InterPro" id="IPR046450">
    <property type="entry name" value="PA_dom_sf"/>
</dbReference>
<dbReference type="InterPro" id="IPR003137">
    <property type="entry name" value="PA_domain"/>
</dbReference>
<dbReference type="InterPro" id="IPR007484">
    <property type="entry name" value="Peptidase_M28"/>
</dbReference>
<dbReference type="PANTHER" id="PTHR12147">
    <property type="entry name" value="METALLOPEPTIDASE M28 FAMILY MEMBER"/>
    <property type="match status" value="1"/>
</dbReference>
<dbReference type="PANTHER" id="PTHR12147:SF57">
    <property type="entry name" value="PEPTIDE HYDROLASE"/>
    <property type="match status" value="1"/>
</dbReference>
<dbReference type="Pfam" id="PF02225">
    <property type="entry name" value="PA"/>
    <property type="match status" value="1"/>
</dbReference>
<dbReference type="Pfam" id="PF04389">
    <property type="entry name" value="Peptidase_M28"/>
    <property type="match status" value="1"/>
</dbReference>
<dbReference type="SUPFAM" id="SSF52025">
    <property type="entry name" value="PA domain"/>
    <property type="match status" value="1"/>
</dbReference>
<dbReference type="SUPFAM" id="SSF53187">
    <property type="entry name" value="Zn-dependent exopeptidases"/>
    <property type="match status" value="1"/>
</dbReference>
<proteinExistence type="evidence at protein level"/>
<protein>
    <recommendedName>
        <fullName>Leucine aminopeptidase 2</fullName>
        <ecNumber>3.4.11.-</ecNumber>
    </recommendedName>
    <alternativeName>
        <fullName>Leucyl aminopeptidase 2</fullName>
        <shortName>LAP2</shortName>
    </alternativeName>
</protein>
<reference key="1">
    <citation type="journal article" date="2005" name="Microbiology">
        <title>Aminopeptidases and dipeptidyl-peptidases secreted by the dermatophyte Trichophyton rubrum.</title>
        <authorList>
            <person name="Monod M."/>
            <person name="Lechenne B."/>
            <person name="Jousson O."/>
            <person name="Grand D."/>
            <person name="Zaugg C."/>
            <person name="Stoecklin R."/>
            <person name="Grouzmann E."/>
        </authorList>
    </citation>
    <scope>NUCLEOTIDE SEQUENCE [GENOMIC DNA]</scope>
    <scope>SUBCELLULAR LOCATION</scope>
    <scope>FUNCTION</scope>
    <scope>ACTIVITY REGULATION</scope>
    <scope>BIOPHYSICOCHEMICAL PROPERTIES</scope>
</reference>
<reference key="2">
    <citation type="journal article" date="2009" name="Eukaryot. Cell">
        <title>Gene expression profiling in the human pathogenic dermatophyte Trichophyton rubrum during growth on proteins.</title>
        <authorList>
            <person name="Zaugg C."/>
            <person name="Monod M."/>
            <person name="Weber J."/>
            <person name="Harshman K."/>
            <person name="Pradervand S."/>
            <person name="Thomas J."/>
            <person name="Bueno M."/>
            <person name="Giddey K."/>
            <person name="Staib P."/>
        </authorList>
    </citation>
    <scope>INDUCTION</scope>
</reference>
<keyword id="KW-0031">Aminopeptidase</keyword>
<keyword id="KW-0325">Glycoprotein</keyword>
<keyword id="KW-0378">Hydrolase</keyword>
<keyword id="KW-0479">Metal-binding</keyword>
<keyword id="KW-0482">Metalloprotease</keyword>
<keyword id="KW-0645">Protease</keyword>
<keyword id="KW-0964">Secreted</keyword>
<keyword id="KW-0732">Signal</keyword>
<keyword id="KW-0843">Virulence</keyword>
<keyword id="KW-0862">Zinc</keyword>
<organism>
    <name type="scientific">Trichophyton rubrum</name>
    <name type="common">Athlete's foot fungus</name>
    <name type="synonym">Epidermophyton rubrum</name>
    <dbReference type="NCBI Taxonomy" id="5551"/>
    <lineage>
        <taxon>Eukaryota</taxon>
        <taxon>Fungi</taxon>
        <taxon>Dikarya</taxon>
        <taxon>Ascomycota</taxon>
        <taxon>Pezizomycotina</taxon>
        <taxon>Eurotiomycetes</taxon>
        <taxon>Eurotiomycetidae</taxon>
        <taxon>Onygenales</taxon>
        <taxon>Arthrodermataceae</taxon>
        <taxon>Trichophyton</taxon>
    </lineage>
</organism>
<name>LAP2_TRIRU</name>
<evidence type="ECO:0000250" key="1"/>
<evidence type="ECO:0000250" key="2">
    <source>
        <dbReference type="UniProtKB" id="P80561"/>
    </source>
</evidence>
<evidence type="ECO:0000255" key="3"/>
<evidence type="ECO:0000269" key="4">
    <source>
    </source>
</evidence>
<evidence type="ECO:0000269" key="5">
    <source>
    </source>
</evidence>
<evidence type="ECO:0000305" key="6"/>
<sequence>MKSQLLSLAVAVTTISQGVVGQEPFGWPFKPMVTQDDLQNKIKLKDIMAGVEKLQSFSDAHPEKNRVFGGNGHKDTVEWIYNEIKATGYYDVKKQEQVHLWSHAEAALNANGKDLKASAMSYSPPASKIMAELVVAKNNGCNATDYPANTQGKIVLVERGVCSFGEKSAQAGDAKAAGAIVYNNVPGSLAGTLGGLDKRHVPTAGLSQEDGKNLATLVASGKIDVTMNVISLFENRTTWNVIAETKGGDHNNVIMLGAHSDSVDAGPGINDNGSGSIGIMTVAKALTNFKLNNAVRFAWWTAEEFGLLGSTFYVNSLDDRELHKVKLYLNFDMIGSPNFANQIYDGDGSAYNMTGPAGSAEIEYLFEKFFDDQGIPHQPTAFTGRSDYSAFIKRNVPAGGLFTGAEVVKTPEQVKLFGGEAGVAYDKNYHRKGDTVANINKGAIFLNTRAIAYAIAEYARSLKGFPTRPKTGKRDVNPQYSKMPGGGCGHHTVFM</sequence>
<gene>
    <name type="primary">LAP2</name>
</gene>
<comment type="function">
    <text evidence="4">Extracellular aminopeptidase that releases a wide variety of amino acids from natural peptides and contributes to pathogenicity.</text>
</comment>
<comment type="cofactor">
    <cofactor evidence="2">
        <name>Zn(2+)</name>
        <dbReference type="ChEBI" id="CHEBI:29105"/>
    </cofactor>
    <text evidence="2">Binds 2 Zn(2+) ions per subunit.</text>
</comment>
<comment type="activity regulation">
    <text evidence="4">Activity is inhibited by EDTA, o-phenanthroline, bestatin and amastatin.</text>
</comment>
<comment type="biophysicochemical properties">
    <phDependence>
        <text evidence="4">Optimum pH is 7.0.</text>
    </phDependence>
    <temperatureDependence>
        <text evidence="4">Optimum temperatures are ranging from 40 to 50 degrees Celsius.</text>
    </temperatureDependence>
</comment>
<comment type="subunit">
    <text evidence="1">Monomer.</text>
</comment>
<comment type="subcellular location">
    <subcellularLocation>
        <location evidence="4">Secreted</location>
    </subcellularLocation>
</comment>
<comment type="induction">
    <text evidence="5">Expression is strongly increased during growth on protein-rich medium. Expression levels are the same whether keratin is present or not in the protein-rich medium.</text>
</comment>
<comment type="similarity">
    <text evidence="6">Belongs to the peptidase M28 family. M28A subfamily.</text>
</comment>
<feature type="signal peptide" evidence="3">
    <location>
        <begin position="1"/>
        <end position="21"/>
    </location>
</feature>
<feature type="chain" id="PRO_0000384096" description="Leucine aminopeptidase 2">
    <location>
        <begin position="22"/>
        <end position="495"/>
    </location>
</feature>
<feature type="domain" description="PA">
    <location>
        <begin position="124"/>
        <end position="218"/>
    </location>
</feature>
<feature type="active site" description="Proton acceptor" evidence="2">
    <location>
        <position position="303"/>
    </location>
</feature>
<feature type="binding site" evidence="2">
    <location>
        <position position="259"/>
    </location>
    <ligand>
        <name>Zn(2+)</name>
        <dbReference type="ChEBI" id="CHEBI:29105"/>
        <label>1</label>
        <note>catalytic</note>
    </ligand>
</feature>
<feature type="binding site" evidence="2">
    <location>
        <position position="271"/>
    </location>
    <ligand>
        <name>Zn(2+)</name>
        <dbReference type="ChEBI" id="CHEBI:29105"/>
        <label>1</label>
        <note>catalytic</note>
    </ligand>
</feature>
<feature type="binding site" evidence="2">
    <location>
        <position position="271"/>
    </location>
    <ligand>
        <name>Zn(2+)</name>
        <dbReference type="ChEBI" id="CHEBI:29105"/>
        <label>2</label>
        <note>catalytic</note>
    </ligand>
</feature>
<feature type="binding site" evidence="2">
    <location>
        <position position="304"/>
    </location>
    <ligand>
        <name>Zn(2+)</name>
        <dbReference type="ChEBI" id="CHEBI:29105"/>
        <label>2</label>
        <note>catalytic</note>
    </ligand>
</feature>
<feature type="binding site" evidence="2">
    <location>
        <position position="332"/>
    </location>
    <ligand>
        <name>Zn(2+)</name>
        <dbReference type="ChEBI" id="CHEBI:29105"/>
        <label>1</label>
        <note>catalytic</note>
    </ligand>
</feature>
<feature type="binding site" evidence="2">
    <location>
        <position position="430"/>
    </location>
    <ligand>
        <name>Zn(2+)</name>
        <dbReference type="ChEBI" id="CHEBI:29105"/>
        <label>2</label>
        <note>catalytic</note>
    </ligand>
</feature>
<feature type="site" description="Transition state stabilizer" evidence="2">
    <location>
        <position position="429"/>
    </location>
</feature>
<feature type="glycosylation site" description="N-linked (GlcNAc...) asparagine" evidence="3">
    <location>
        <position position="142"/>
    </location>
</feature>
<feature type="glycosylation site" description="N-linked (GlcNAc...) asparagine" evidence="3">
    <location>
        <position position="235"/>
    </location>
</feature>
<feature type="glycosylation site" description="N-linked (GlcNAc...) asparagine" evidence="3">
    <location>
        <position position="272"/>
    </location>
</feature>
<feature type="glycosylation site" description="N-linked (GlcNAc...) asparagine" evidence="3">
    <location>
        <position position="352"/>
    </location>
</feature>
<accession>Q5QHG6</accession>